<protein>
    <recommendedName>
        <fullName>S-adenosylmethionine decarboxylase proenzyme</fullName>
        <shortName>AdoMetDC</shortName>
        <shortName>SAMDC</shortName>
        <ecNumber>4.1.1.50</ecNumber>
    </recommendedName>
    <component>
        <recommendedName>
            <fullName>S-adenosylmethionine decarboxylase alpha chain</fullName>
        </recommendedName>
    </component>
    <component>
        <recommendedName>
            <fullName>S-adenosylmethionine decarboxylase beta chain</fullName>
        </recommendedName>
    </component>
</protein>
<name>DCAM_LEIDO</name>
<proteinExistence type="inferred from homology"/>
<reference key="1">
    <citation type="journal article" date="2002" name="J. Biol. Chem.">
        <title>S-adenosylmethionine decarboxylase from Leishmania donovani. Molecular, genetic, and biochemical characterization of null mutants and overproducers.</title>
        <authorList>
            <person name="Roberts S.C."/>
            <person name="Scott J."/>
            <person name="Gasteier J.E."/>
            <person name="Jiang Y."/>
            <person name="Brooks B."/>
            <person name="Jardim A."/>
            <person name="Carter N.S."/>
            <person name="Heby O."/>
            <person name="Ullman B."/>
        </authorList>
    </citation>
    <scope>NUCLEOTIDE SEQUENCE [GENOMIC DNA]</scope>
    <source>
        <strain>MHOM/SD/62/1S</strain>
    </source>
</reference>
<accession>Q25264</accession>
<organism>
    <name type="scientific">Leishmania donovani</name>
    <dbReference type="NCBI Taxonomy" id="5661"/>
    <lineage>
        <taxon>Eukaryota</taxon>
        <taxon>Discoba</taxon>
        <taxon>Euglenozoa</taxon>
        <taxon>Kinetoplastea</taxon>
        <taxon>Metakinetoplastina</taxon>
        <taxon>Trypanosomatida</taxon>
        <taxon>Trypanosomatidae</taxon>
        <taxon>Leishmaniinae</taxon>
        <taxon>Leishmania</taxon>
    </lineage>
</organism>
<comment type="catalytic activity">
    <reaction>
        <text>S-adenosyl-L-methionine + H(+) = S-adenosyl 3-(methylsulfanyl)propylamine + CO2</text>
        <dbReference type="Rhea" id="RHEA:15981"/>
        <dbReference type="ChEBI" id="CHEBI:15378"/>
        <dbReference type="ChEBI" id="CHEBI:16526"/>
        <dbReference type="ChEBI" id="CHEBI:57443"/>
        <dbReference type="ChEBI" id="CHEBI:59789"/>
        <dbReference type="EC" id="4.1.1.50"/>
    </reaction>
</comment>
<comment type="cofactor">
    <cofactor>
        <name>pyruvate</name>
        <dbReference type="ChEBI" id="CHEBI:15361"/>
    </cofactor>
    <text>Binds 1 pyruvoyl group covalently per subunit.</text>
</comment>
<comment type="pathway">
    <text>Amine and polyamine biosynthesis; S-adenosylmethioninamine biosynthesis; S-adenosylmethioninamine from S-adenosyl-L-methionine: step 1/1.</text>
</comment>
<comment type="subunit">
    <text evidence="1">Heterotetramer of two alpha and two beta chains.</text>
</comment>
<comment type="PTM">
    <text evidence="1">Is synthesized initially as an inactive proenzyme. Formation of the active enzyme involves a self-maturation process in which the active site pyruvoyl group is generated from an internal serine residue via an autocatalytic post-translational modification. Two non-identical subunits are generated from the proenzyme in this reaction, and the pyruvate is formed at the N-terminus of the alpha chain, which is derived from the carboxyl end of the proenzyme. The post-translation cleavage follows an unusual pathway, termed non-hydrolytic serinolysis, in which the side chain hydroxyl group of the serine supplies its oxygen atom to form the C-terminus of the beta chain, while the remainder of the serine residue undergoes an oxidative deamination to produce ammonia and the pyruvoyl group blocking the N-terminus of the alpha chain (By similarity).</text>
</comment>
<comment type="similarity">
    <text evidence="2">Belongs to the eukaryotic AdoMetDC family.</text>
</comment>
<evidence type="ECO:0000250" key="1"/>
<evidence type="ECO:0000305" key="2"/>
<dbReference type="EC" id="4.1.1.50"/>
<dbReference type="EMBL" id="U20091">
    <property type="protein sequence ID" value="AAA61968.2"/>
    <property type="molecule type" value="Genomic_DNA"/>
</dbReference>
<dbReference type="SMR" id="Q25264"/>
<dbReference type="VEuPathDB" id="TriTrypDB:LdBPK_303150.1"/>
<dbReference type="VEuPathDB" id="TriTrypDB:LdCL_300037100"/>
<dbReference type="VEuPathDB" id="TriTrypDB:LDHU3_30.4190"/>
<dbReference type="BRENDA" id="4.1.1.50">
    <property type="organism ID" value="2947"/>
</dbReference>
<dbReference type="UniPathway" id="UPA00331">
    <property type="reaction ID" value="UER00451"/>
</dbReference>
<dbReference type="GO" id="GO:0005829">
    <property type="term" value="C:cytosol"/>
    <property type="evidence" value="ECO:0007669"/>
    <property type="project" value="TreeGrafter"/>
</dbReference>
<dbReference type="GO" id="GO:0004014">
    <property type="term" value="F:adenosylmethionine decarboxylase activity"/>
    <property type="evidence" value="ECO:0007669"/>
    <property type="project" value="UniProtKB-EC"/>
</dbReference>
<dbReference type="GO" id="GO:0008295">
    <property type="term" value="P:spermidine biosynthetic process"/>
    <property type="evidence" value="ECO:0007669"/>
    <property type="project" value="UniProtKB-KW"/>
</dbReference>
<dbReference type="GO" id="GO:0006597">
    <property type="term" value="P:spermine biosynthetic process"/>
    <property type="evidence" value="ECO:0007669"/>
    <property type="project" value="InterPro"/>
</dbReference>
<dbReference type="FunFam" id="3.60.90.10:FF:000009">
    <property type="entry name" value="S-adenosylmethionine decarboxylase proenzyme"/>
    <property type="match status" value="1"/>
</dbReference>
<dbReference type="Gene3D" id="3.30.360.50">
    <property type="entry name" value="S-adenosylmethionine decarboxylase"/>
    <property type="match status" value="1"/>
</dbReference>
<dbReference type="Gene3D" id="3.60.90.10">
    <property type="entry name" value="S-adenosylmethionine decarboxylase"/>
    <property type="match status" value="1"/>
</dbReference>
<dbReference type="InterPro" id="IPR048283">
    <property type="entry name" value="AdoMetDC-like"/>
</dbReference>
<dbReference type="InterPro" id="IPR001985">
    <property type="entry name" value="S-AdoMet_decarboxylase_euk"/>
</dbReference>
<dbReference type="InterPro" id="IPR016067">
    <property type="entry name" value="S-AdoMet_deCO2ase_core"/>
</dbReference>
<dbReference type="InterPro" id="IPR018166">
    <property type="entry name" value="S-AdoMet_deCO2ase_CS"/>
</dbReference>
<dbReference type="PANTHER" id="PTHR11570">
    <property type="entry name" value="S-ADENOSYLMETHIONINE DECARBOXYLASE"/>
    <property type="match status" value="1"/>
</dbReference>
<dbReference type="PANTHER" id="PTHR11570:SF0">
    <property type="entry name" value="S-ADENOSYLMETHIONINE DECARBOXYLASE PROENZYME"/>
    <property type="match status" value="1"/>
</dbReference>
<dbReference type="Pfam" id="PF01536">
    <property type="entry name" value="SAM_decarbox"/>
    <property type="match status" value="1"/>
</dbReference>
<dbReference type="PIRSF" id="PIRSF001355">
    <property type="entry name" value="S-AdenosylMet_decarboxylase"/>
    <property type="match status" value="1"/>
</dbReference>
<dbReference type="SUPFAM" id="SSF56276">
    <property type="entry name" value="S-adenosylmethionine decarboxylase"/>
    <property type="match status" value="1"/>
</dbReference>
<dbReference type="PROSITE" id="PS01336">
    <property type="entry name" value="ADOMETDC"/>
    <property type="match status" value="1"/>
</dbReference>
<feature type="chain" id="PRO_0000029979" description="S-adenosylmethionine decarboxylase beta chain" evidence="1">
    <location>
        <begin position="1"/>
        <end position="89"/>
    </location>
</feature>
<feature type="chain" id="PRO_0000029980" description="S-adenosylmethionine decarboxylase alpha chain" evidence="1">
    <location>
        <begin position="90"/>
        <end position="382"/>
    </location>
</feature>
<feature type="active site" evidence="1">
    <location>
        <position position="33"/>
    </location>
</feature>
<feature type="active site" evidence="1">
    <location>
        <position position="36"/>
    </location>
</feature>
<feature type="active site" description="Schiff-base intermediate with substrate; via pyruvic acid" evidence="1">
    <location>
        <position position="90"/>
    </location>
</feature>
<feature type="active site" description="Proton donor; for catalytic activity" evidence="1">
    <location>
        <position position="104"/>
    </location>
</feature>
<feature type="active site" description="Proton acceptor; for processing activity" evidence="1">
    <location>
        <position position="254"/>
    </location>
</feature>
<feature type="active site" description="Proton acceptor; for processing activity" evidence="1">
    <location>
        <position position="267"/>
    </location>
</feature>
<feature type="binding site" evidence="1">
    <location>
        <position position="32"/>
    </location>
    <ligand>
        <name>substrate</name>
    </ligand>
</feature>
<feature type="binding site" evidence="1">
    <location>
        <position position="87"/>
    </location>
    <ligand>
        <name>substrate</name>
    </ligand>
</feature>
<feature type="binding site" evidence="1">
    <location>
        <position position="248"/>
    </location>
    <ligand>
        <name>substrate</name>
    </ligand>
</feature>
<feature type="binding site" evidence="1">
    <location>
        <position position="271"/>
    </location>
    <ligand>
        <name>substrate</name>
    </ligand>
</feature>
<feature type="site" description="Cleavage (non-hydrolytic); by autolysis" evidence="1">
    <location>
        <begin position="89"/>
        <end position="90"/>
    </location>
</feature>
<feature type="site" description="Important for catalytic activity" evidence="1">
    <location>
        <position position="254"/>
    </location>
</feature>
<feature type="modified residue" description="Pyruvic acid (Ser); by autocatalysis" evidence="1">
    <location>
        <position position="90"/>
    </location>
</feature>
<keyword id="KW-0068">Autocatalytic cleavage</keyword>
<keyword id="KW-0210">Decarboxylase</keyword>
<keyword id="KW-0456">Lyase</keyword>
<keyword id="KW-0620">Polyamine biosynthesis</keyword>
<keyword id="KW-0670">Pyruvate</keyword>
<keyword id="KW-0949">S-adenosyl-L-methionine</keyword>
<keyword id="KW-0704">Schiff base</keyword>
<keyword id="KW-0745">Spermidine biosynthesis</keyword>
<keyword id="KW-0865">Zymogen</keyword>
<sequence>MNVCSNTTKDPLTLMAMWGSMKGYNPEQGFSFEGPEKRLEVILRCTLETHVDGLRSLDDSVWSGVVGSLNAQIVSRESNEYINSYVLTESSLFVMKNRIILITCGTTTLLNSIPNILEAISAVRGELEWVSFMHKNYSFPWMQKGPHTSLADEFATLKQHFPTGKPYIFGPVDSDHYFLFCYDDIIRPCSSEDDTQLSMTMYGLDKEQTKHWFSDRFISTSAETAAIRAATHLDRVVDGTWTLHDLQFEPCGYSINAIRDEEYQTMHITPEDHCSFASYETNSRAANYSDRMKKVLGVFRPQRFTVIVFLDPESPVGKAYNEGKGIGVEPEYYPEYNLLHRTTNEFAPGYVAMKINYVRTAAVEETDTAVGGAEPGAEGGPD</sequence>